<gene>
    <name evidence="1" type="primary">gatC</name>
    <name type="ordered locus">PSPA7_5096</name>
</gene>
<proteinExistence type="inferred from homology"/>
<keyword id="KW-0067">ATP-binding</keyword>
<keyword id="KW-0436">Ligase</keyword>
<keyword id="KW-0547">Nucleotide-binding</keyword>
<keyword id="KW-0648">Protein biosynthesis</keyword>
<sequence length="95" mass="10443">MALERSDVEKIAHLARLGLSEADLPRTTETLNNILGLIDQMQAVDTSGVEPLAHPLEATQRLRPDAVTETDHRDAYQTIAPAVEEGLYLVPKVIE</sequence>
<comment type="function">
    <text evidence="1">Allows the formation of correctly charged Asn-tRNA(Asn) or Gln-tRNA(Gln) through the transamidation of misacylated Asp-tRNA(Asn) or Glu-tRNA(Gln) in organisms which lack either or both of asparaginyl-tRNA or glutaminyl-tRNA synthetases. The reaction takes place in the presence of glutamine and ATP through an activated phospho-Asp-tRNA(Asn) or phospho-Glu-tRNA(Gln).</text>
</comment>
<comment type="catalytic activity">
    <reaction evidence="1">
        <text>L-glutamyl-tRNA(Gln) + L-glutamine + ATP + H2O = L-glutaminyl-tRNA(Gln) + L-glutamate + ADP + phosphate + H(+)</text>
        <dbReference type="Rhea" id="RHEA:17521"/>
        <dbReference type="Rhea" id="RHEA-COMP:9681"/>
        <dbReference type="Rhea" id="RHEA-COMP:9684"/>
        <dbReference type="ChEBI" id="CHEBI:15377"/>
        <dbReference type="ChEBI" id="CHEBI:15378"/>
        <dbReference type="ChEBI" id="CHEBI:29985"/>
        <dbReference type="ChEBI" id="CHEBI:30616"/>
        <dbReference type="ChEBI" id="CHEBI:43474"/>
        <dbReference type="ChEBI" id="CHEBI:58359"/>
        <dbReference type="ChEBI" id="CHEBI:78520"/>
        <dbReference type="ChEBI" id="CHEBI:78521"/>
        <dbReference type="ChEBI" id="CHEBI:456216"/>
    </reaction>
</comment>
<comment type="catalytic activity">
    <reaction evidence="1">
        <text>L-aspartyl-tRNA(Asn) + L-glutamine + ATP + H2O = L-asparaginyl-tRNA(Asn) + L-glutamate + ADP + phosphate + 2 H(+)</text>
        <dbReference type="Rhea" id="RHEA:14513"/>
        <dbReference type="Rhea" id="RHEA-COMP:9674"/>
        <dbReference type="Rhea" id="RHEA-COMP:9677"/>
        <dbReference type="ChEBI" id="CHEBI:15377"/>
        <dbReference type="ChEBI" id="CHEBI:15378"/>
        <dbReference type="ChEBI" id="CHEBI:29985"/>
        <dbReference type="ChEBI" id="CHEBI:30616"/>
        <dbReference type="ChEBI" id="CHEBI:43474"/>
        <dbReference type="ChEBI" id="CHEBI:58359"/>
        <dbReference type="ChEBI" id="CHEBI:78515"/>
        <dbReference type="ChEBI" id="CHEBI:78516"/>
        <dbReference type="ChEBI" id="CHEBI:456216"/>
    </reaction>
</comment>
<comment type="subunit">
    <text evidence="1">Heterotrimer of A, B and C subunits.</text>
</comment>
<comment type="similarity">
    <text evidence="1">Belongs to the GatC family.</text>
</comment>
<evidence type="ECO:0000255" key="1">
    <source>
        <dbReference type="HAMAP-Rule" id="MF_00122"/>
    </source>
</evidence>
<name>GATC_PSEP7</name>
<dbReference type="EC" id="6.3.5.-" evidence="1"/>
<dbReference type="EMBL" id="CP000744">
    <property type="protein sequence ID" value="ABR84291.1"/>
    <property type="molecule type" value="Genomic_DNA"/>
</dbReference>
<dbReference type="RefSeq" id="WP_003094397.1">
    <property type="nucleotide sequence ID" value="NC_009656.1"/>
</dbReference>
<dbReference type="SMR" id="A6VBJ7"/>
<dbReference type="GeneID" id="77222983"/>
<dbReference type="KEGG" id="pap:PSPA7_5096"/>
<dbReference type="HOGENOM" id="CLU_105899_2_2_6"/>
<dbReference type="Proteomes" id="UP000001582">
    <property type="component" value="Chromosome"/>
</dbReference>
<dbReference type="GO" id="GO:0050566">
    <property type="term" value="F:asparaginyl-tRNA synthase (glutamine-hydrolyzing) activity"/>
    <property type="evidence" value="ECO:0007669"/>
    <property type="project" value="RHEA"/>
</dbReference>
<dbReference type="GO" id="GO:0005524">
    <property type="term" value="F:ATP binding"/>
    <property type="evidence" value="ECO:0007669"/>
    <property type="project" value="UniProtKB-KW"/>
</dbReference>
<dbReference type="GO" id="GO:0050567">
    <property type="term" value="F:glutaminyl-tRNA synthase (glutamine-hydrolyzing) activity"/>
    <property type="evidence" value="ECO:0007669"/>
    <property type="project" value="UniProtKB-UniRule"/>
</dbReference>
<dbReference type="GO" id="GO:0070681">
    <property type="term" value="P:glutaminyl-tRNAGln biosynthesis via transamidation"/>
    <property type="evidence" value="ECO:0007669"/>
    <property type="project" value="TreeGrafter"/>
</dbReference>
<dbReference type="GO" id="GO:0006450">
    <property type="term" value="P:regulation of translational fidelity"/>
    <property type="evidence" value="ECO:0007669"/>
    <property type="project" value="InterPro"/>
</dbReference>
<dbReference type="GO" id="GO:0006412">
    <property type="term" value="P:translation"/>
    <property type="evidence" value="ECO:0007669"/>
    <property type="project" value="UniProtKB-UniRule"/>
</dbReference>
<dbReference type="Gene3D" id="1.10.20.60">
    <property type="entry name" value="Glu-tRNAGln amidotransferase C subunit, N-terminal domain"/>
    <property type="match status" value="1"/>
</dbReference>
<dbReference type="HAMAP" id="MF_00122">
    <property type="entry name" value="GatC"/>
    <property type="match status" value="1"/>
</dbReference>
<dbReference type="InterPro" id="IPR036113">
    <property type="entry name" value="Asp/Glu-ADT_sf_sub_c"/>
</dbReference>
<dbReference type="InterPro" id="IPR003837">
    <property type="entry name" value="GatC"/>
</dbReference>
<dbReference type="NCBIfam" id="TIGR00135">
    <property type="entry name" value="gatC"/>
    <property type="match status" value="1"/>
</dbReference>
<dbReference type="PANTHER" id="PTHR15004">
    <property type="entry name" value="GLUTAMYL-TRNA(GLN) AMIDOTRANSFERASE SUBUNIT C, MITOCHONDRIAL"/>
    <property type="match status" value="1"/>
</dbReference>
<dbReference type="PANTHER" id="PTHR15004:SF0">
    <property type="entry name" value="GLUTAMYL-TRNA(GLN) AMIDOTRANSFERASE SUBUNIT C, MITOCHONDRIAL"/>
    <property type="match status" value="1"/>
</dbReference>
<dbReference type="Pfam" id="PF02686">
    <property type="entry name" value="GatC"/>
    <property type="match status" value="1"/>
</dbReference>
<dbReference type="SUPFAM" id="SSF141000">
    <property type="entry name" value="Glu-tRNAGln amidotransferase C subunit"/>
    <property type="match status" value="1"/>
</dbReference>
<reference key="1">
    <citation type="submission" date="2007-06" db="EMBL/GenBank/DDBJ databases">
        <authorList>
            <person name="Dodson R.J."/>
            <person name="Harkins D."/>
            <person name="Paulsen I.T."/>
        </authorList>
    </citation>
    <scope>NUCLEOTIDE SEQUENCE [LARGE SCALE GENOMIC DNA]</scope>
    <source>
        <strain>DSM 24068 / PA7</strain>
    </source>
</reference>
<protein>
    <recommendedName>
        <fullName evidence="1">Aspartyl/glutamyl-tRNA(Asn/Gln) amidotransferase subunit C</fullName>
        <shortName evidence="1">Asp/Glu-ADT subunit C</shortName>
        <ecNumber evidence="1">6.3.5.-</ecNumber>
    </recommendedName>
</protein>
<feature type="chain" id="PRO_1000016178" description="Aspartyl/glutamyl-tRNA(Asn/Gln) amidotransferase subunit C">
    <location>
        <begin position="1"/>
        <end position="95"/>
    </location>
</feature>
<organism>
    <name type="scientific">Pseudomonas paraeruginosa (strain DSM 24068 / PA7)</name>
    <name type="common">Pseudomonas aeruginosa (strain PA7)</name>
    <dbReference type="NCBI Taxonomy" id="381754"/>
    <lineage>
        <taxon>Bacteria</taxon>
        <taxon>Pseudomonadati</taxon>
        <taxon>Pseudomonadota</taxon>
        <taxon>Gammaproteobacteria</taxon>
        <taxon>Pseudomonadales</taxon>
        <taxon>Pseudomonadaceae</taxon>
        <taxon>Pseudomonas</taxon>
        <taxon>Pseudomonas paraeruginosa</taxon>
    </lineage>
</organism>
<accession>A6VBJ7</accession>